<evidence type="ECO:0000250" key="1">
    <source>
        <dbReference type="UniProtKB" id="Q9EPK6"/>
    </source>
</evidence>
<evidence type="ECO:0000250" key="2">
    <source>
        <dbReference type="UniProtKB" id="Q9H173"/>
    </source>
</evidence>
<evidence type="ECO:0000255" key="3"/>
<evidence type="ECO:0000256" key="4">
    <source>
        <dbReference type="SAM" id="MobiDB-lite"/>
    </source>
</evidence>
<evidence type="ECO:0000305" key="5"/>
<accession>Q6P6S4</accession>
<proteinExistence type="evidence at transcript level"/>
<protein>
    <recommendedName>
        <fullName>Nucleotide exchange factor SIL1</fullName>
    </recommendedName>
</protein>
<keyword id="KW-0256">Endoplasmic reticulum</keyword>
<keyword id="KW-0325">Glycoprotein</keyword>
<keyword id="KW-0653">Protein transport</keyword>
<keyword id="KW-1185">Reference proteome</keyword>
<keyword id="KW-0732">Signal</keyword>
<keyword id="KW-0811">Translocation</keyword>
<keyword id="KW-0813">Transport</keyword>
<keyword id="KW-0832">Ubl conjugation</keyword>
<name>SIL1_RAT</name>
<comment type="function">
    <text evidence="2">Required for protein translocation and folding in the endoplasmic reticulum (ER). Functions as a nucleotide exchange factor for the ER lumenal chaperone HSPA5.</text>
</comment>
<comment type="subunit">
    <text evidence="2">Interacts with HSPA5.</text>
</comment>
<comment type="subcellular location">
    <subcellularLocation>
        <location evidence="2">Endoplasmic reticulum lumen</location>
    </subcellularLocation>
</comment>
<comment type="PTM">
    <text evidence="2">N-glycosylated.</text>
</comment>
<comment type="PTM">
    <text evidence="2">Ubiquitinated by the CRL2(FEM1A) and CRL2(FEM1C) complexes, which recognize the -Lys-Xaa-Xaa-Arg C-degron at the C-terminus, leading to its degradation.</text>
</comment>
<comment type="similarity">
    <text evidence="5">Belongs to the SIL1 family.</text>
</comment>
<gene>
    <name type="primary">Sil1</name>
</gene>
<sequence>MAPQHLPSTRMAPQGMLLGLLLASCLTFCLSCQNSNNFALTNPEKSTHEDSDTKETRREEELDAEVLEVLNPTQEWQALQPGQAVPAGSHVRMNLQTGVNEVKLQQEDKFQSNWKGFKRGRRLDINTNTYTSQDLKSALAKFKEGTEMENSKDELARQATVKQLFRPIEELKKEFDELNVVLETDMQIMVRLINKFNSSSSSLEEKVAALFDLEYYVHQMDNAQDLLSFGGLQVVINGLNSTEPLVKEYAAFVLGAAFSSNPKVQVEAIEGGALQKLLVILATEQPLPAKKKVLFALCSLLRHFPYAQQQFLKLGGLQVLRSLVQEKSAKVLAVRVVTLLYDLVTEKMFAEEEAELTQESSPEKLQQYRQVQLLPGLREQGWCEITAQLLALPEHDAREKVLQTLGALLATCRDRYRQDLELSRTLGSLQAEYQALASLELQEGEDDGYFRELLASIDSLVKELR</sequence>
<organism>
    <name type="scientific">Rattus norvegicus</name>
    <name type="common">Rat</name>
    <dbReference type="NCBI Taxonomy" id="10116"/>
    <lineage>
        <taxon>Eukaryota</taxon>
        <taxon>Metazoa</taxon>
        <taxon>Chordata</taxon>
        <taxon>Craniata</taxon>
        <taxon>Vertebrata</taxon>
        <taxon>Euteleostomi</taxon>
        <taxon>Mammalia</taxon>
        <taxon>Eutheria</taxon>
        <taxon>Euarchontoglires</taxon>
        <taxon>Glires</taxon>
        <taxon>Rodentia</taxon>
        <taxon>Myomorpha</taxon>
        <taxon>Muroidea</taxon>
        <taxon>Muridae</taxon>
        <taxon>Murinae</taxon>
        <taxon>Rattus</taxon>
    </lineage>
</organism>
<dbReference type="EMBL" id="BC062050">
    <property type="protein sequence ID" value="AAH62050.1"/>
    <property type="molecule type" value="mRNA"/>
</dbReference>
<dbReference type="RefSeq" id="NP_955408.1">
    <property type="nucleotide sequence ID" value="NM_199376.1"/>
</dbReference>
<dbReference type="RefSeq" id="XP_008770247.1">
    <property type="nucleotide sequence ID" value="XM_008772025.4"/>
</dbReference>
<dbReference type="RefSeq" id="XP_017456394.1">
    <property type="nucleotide sequence ID" value="XM_017600905.3"/>
</dbReference>
<dbReference type="RefSeq" id="XP_038952646.1">
    <property type="nucleotide sequence ID" value="XM_039096718.2"/>
</dbReference>
<dbReference type="SMR" id="Q6P6S4"/>
<dbReference type="FunCoup" id="Q6P6S4">
    <property type="interactions" value="1664"/>
</dbReference>
<dbReference type="IntAct" id="Q6P6S4">
    <property type="interactions" value="1"/>
</dbReference>
<dbReference type="STRING" id="10116.ENSRNOP00000026895"/>
<dbReference type="GlyCosmos" id="Q6P6S4">
    <property type="glycosylation" value="2 sites, No reported glycans"/>
</dbReference>
<dbReference type="GlyGen" id="Q6P6S4">
    <property type="glycosylation" value="2 sites"/>
</dbReference>
<dbReference type="PhosphoSitePlus" id="Q6P6S4"/>
<dbReference type="PaxDb" id="10116-ENSRNOP00000026895"/>
<dbReference type="Ensembl" id="ENSRNOT00000026895.6">
    <property type="protein sequence ID" value="ENSRNOP00000026895.4"/>
    <property type="gene ID" value="ENSRNOG00000019826.6"/>
</dbReference>
<dbReference type="GeneID" id="291673"/>
<dbReference type="KEGG" id="rno:291673"/>
<dbReference type="UCSC" id="RGD:735103">
    <property type="organism name" value="rat"/>
</dbReference>
<dbReference type="AGR" id="RGD:735103"/>
<dbReference type="CTD" id="64374"/>
<dbReference type="RGD" id="735103">
    <property type="gene designation" value="Sil1"/>
</dbReference>
<dbReference type="eggNOG" id="KOG2160">
    <property type="taxonomic scope" value="Eukaryota"/>
</dbReference>
<dbReference type="GeneTree" id="ENSGT00940000153909"/>
<dbReference type="HOGENOM" id="CLU_046547_1_0_1"/>
<dbReference type="InParanoid" id="Q6P6S4"/>
<dbReference type="PhylomeDB" id="Q6P6S4"/>
<dbReference type="TreeFam" id="TF324307"/>
<dbReference type="PRO" id="PR:Q6P6S4"/>
<dbReference type="Proteomes" id="UP000002494">
    <property type="component" value="Chromosome 18"/>
</dbReference>
<dbReference type="Bgee" id="ENSRNOG00000019826">
    <property type="expression patterns" value="Expressed in pancreas and 20 other cell types or tissues"/>
</dbReference>
<dbReference type="GO" id="GO:0005783">
    <property type="term" value="C:endoplasmic reticulum"/>
    <property type="evidence" value="ECO:0000266"/>
    <property type="project" value="RGD"/>
</dbReference>
<dbReference type="GO" id="GO:0005788">
    <property type="term" value="C:endoplasmic reticulum lumen"/>
    <property type="evidence" value="ECO:0007669"/>
    <property type="project" value="UniProtKB-SubCell"/>
</dbReference>
<dbReference type="GO" id="GO:0000774">
    <property type="term" value="F:adenyl-nucleotide exchange factor activity"/>
    <property type="evidence" value="ECO:0000266"/>
    <property type="project" value="RGD"/>
</dbReference>
<dbReference type="GO" id="GO:0042802">
    <property type="term" value="F:identical protein binding"/>
    <property type="evidence" value="ECO:0000266"/>
    <property type="project" value="RGD"/>
</dbReference>
<dbReference type="GO" id="GO:0015031">
    <property type="term" value="P:protein transport"/>
    <property type="evidence" value="ECO:0007669"/>
    <property type="project" value="UniProtKB-KW"/>
</dbReference>
<dbReference type="FunFam" id="1.25.10.10:FF:000148">
    <property type="entry name" value="SIL1 nucleotide exchange factor"/>
    <property type="match status" value="1"/>
</dbReference>
<dbReference type="Gene3D" id="1.25.10.10">
    <property type="entry name" value="Leucine-rich Repeat Variant"/>
    <property type="match status" value="1"/>
</dbReference>
<dbReference type="InterPro" id="IPR011989">
    <property type="entry name" value="ARM-like"/>
</dbReference>
<dbReference type="InterPro" id="IPR016024">
    <property type="entry name" value="ARM-type_fold"/>
</dbReference>
<dbReference type="InterPro" id="IPR050693">
    <property type="entry name" value="Hsp70_NEF-Inhibitors"/>
</dbReference>
<dbReference type="PANTHER" id="PTHR19316:SF35">
    <property type="entry name" value="NUCLEOTIDE EXCHANGE FACTOR SIL1"/>
    <property type="match status" value="1"/>
</dbReference>
<dbReference type="PANTHER" id="PTHR19316">
    <property type="entry name" value="PROTEIN FOLDING REGULATOR"/>
    <property type="match status" value="1"/>
</dbReference>
<dbReference type="SUPFAM" id="SSF48371">
    <property type="entry name" value="ARM repeat"/>
    <property type="match status" value="1"/>
</dbReference>
<feature type="signal peptide" evidence="3">
    <location>
        <begin position="1"/>
        <end position="31"/>
    </location>
</feature>
<feature type="chain" id="PRO_0000223356" description="Nucleotide exchange factor SIL1">
    <location>
        <begin position="32"/>
        <end position="465"/>
    </location>
</feature>
<feature type="region of interest" description="Interaction with HSPA5 and localization to the endoplasmic reticulum" evidence="1">
    <location>
        <begin position="1"/>
        <end position="260"/>
    </location>
</feature>
<feature type="region of interest" description="Disordered" evidence="4">
    <location>
        <begin position="39"/>
        <end position="60"/>
    </location>
</feature>
<feature type="compositionally biased region" description="Basic and acidic residues" evidence="4">
    <location>
        <begin position="45"/>
        <end position="60"/>
    </location>
</feature>
<feature type="glycosylation site" description="N-linked (GlcNAc...) asparagine" evidence="3">
    <location>
        <position position="197"/>
    </location>
</feature>
<feature type="glycosylation site" description="N-linked (GlcNAc...) asparagine" evidence="3">
    <location>
        <position position="240"/>
    </location>
</feature>
<reference key="1">
    <citation type="journal article" date="2004" name="Genome Res.">
        <title>The status, quality, and expansion of the NIH full-length cDNA project: the Mammalian Gene Collection (MGC).</title>
        <authorList>
            <consortium name="The MGC Project Team"/>
        </authorList>
    </citation>
    <scope>NUCLEOTIDE SEQUENCE [LARGE SCALE MRNA]</scope>
    <source>
        <tissue>Prostate</tissue>
    </source>
</reference>